<accession>Q89ED5</accession>
<name>TOLB_BRADU</name>
<proteinExistence type="inferred from homology"/>
<comment type="function">
    <text evidence="1">Part of the Tol-Pal system, which plays a role in outer membrane invagination during cell division and is important for maintaining outer membrane integrity.</text>
</comment>
<comment type="subunit">
    <text evidence="1">The Tol-Pal system is composed of five core proteins: the inner membrane proteins TolA, TolQ and TolR, the periplasmic protein TolB and the outer membrane protein Pal. They form a network linking the inner and outer membranes and the peptidoglycan layer.</text>
</comment>
<comment type="subcellular location">
    <subcellularLocation>
        <location evidence="1">Periplasm</location>
    </subcellularLocation>
</comment>
<comment type="similarity">
    <text evidence="1">Belongs to the TolB family.</text>
</comment>
<comment type="sequence caution" evidence="2">
    <conflict type="erroneous initiation">
        <sequence resource="EMBL-CDS" id="BAC52417"/>
    </conflict>
</comment>
<keyword id="KW-0131">Cell cycle</keyword>
<keyword id="KW-0132">Cell division</keyword>
<keyword id="KW-0574">Periplasm</keyword>
<keyword id="KW-1185">Reference proteome</keyword>
<keyword id="KW-0732">Signal</keyword>
<protein>
    <recommendedName>
        <fullName evidence="1">Tol-Pal system protein TolB</fullName>
    </recommendedName>
</protein>
<gene>
    <name evidence="1" type="primary">tolB</name>
    <name type="ordered locus">bll7152</name>
</gene>
<organism>
    <name type="scientific">Bradyrhizobium diazoefficiens (strain JCM 10833 / BCRC 13528 / IAM 13628 / NBRC 14792 / USDA 110)</name>
    <dbReference type="NCBI Taxonomy" id="224911"/>
    <lineage>
        <taxon>Bacteria</taxon>
        <taxon>Pseudomonadati</taxon>
        <taxon>Pseudomonadota</taxon>
        <taxon>Alphaproteobacteria</taxon>
        <taxon>Hyphomicrobiales</taxon>
        <taxon>Nitrobacteraceae</taxon>
        <taxon>Bradyrhizobium</taxon>
    </lineage>
</organism>
<reference key="1">
    <citation type="journal article" date="2002" name="DNA Res.">
        <title>Complete genomic sequence of nitrogen-fixing symbiotic bacterium Bradyrhizobium japonicum USDA110.</title>
        <authorList>
            <person name="Kaneko T."/>
            <person name="Nakamura Y."/>
            <person name="Sato S."/>
            <person name="Minamisawa K."/>
            <person name="Uchiumi T."/>
            <person name="Sasamoto S."/>
            <person name="Watanabe A."/>
            <person name="Idesawa K."/>
            <person name="Iriguchi M."/>
            <person name="Kawashima K."/>
            <person name="Kohara M."/>
            <person name="Matsumoto M."/>
            <person name="Shimpo S."/>
            <person name="Tsuruoka H."/>
            <person name="Wada T."/>
            <person name="Yamada M."/>
            <person name="Tabata S."/>
        </authorList>
    </citation>
    <scope>NUCLEOTIDE SEQUENCE [LARGE SCALE GENOMIC DNA]</scope>
    <source>
        <strain>JCM 10833 / BCRC 13528 / IAM 13628 / NBRC 14792 / USDA 110</strain>
    </source>
</reference>
<dbReference type="EMBL" id="BA000040">
    <property type="protein sequence ID" value="BAC52417.1"/>
    <property type="status" value="ALT_INIT"/>
    <property type="molecule type" value="Genomic_DNA"/>
</dbReference>
<dbReference type="RefSeq" id="NP_773792.1">
    <property type="nucleotide sequence ID" value="NC_004463.1"/>
</dbReference>
<dbReference type="RefSeq" id="WP_028173006.1">
    <property type="nucleotide sequence ID" value="NC_004463.1"/>
</dbReference>
<dbReference type="SMR" id="Q89ED5"/>
<dbReference type="FunCoup" id="Q89ED5">
    <property type="interactions" value="51"/>
</dbReference>
<dbReference type="STRING" id="224911.AAV28_33395"/>
<dbReference type="EnsemblBacteria" id="BAC52417">
    <property type="protein sequence ID" value="BAC52417"/>
    <property type="gene ID" value="BAC52417"/>
</dbReference>
<dbReference type="GeneID" id="46494115"/>
<dbReference type="KEGG" id="bja:bll7152"/>
<dbReference type="PATRIC" id="fig|224911.5.peg.7337"/>
<dbReference type="eggNOG" id="COG0823">
    <property type="taxonomic scope" value="Bacteria"/>
</dbReference>
<dbReference type="HOGENOM" id="CLU_047123_0_0_5"/>
<dbReference type="InParanoid" id="Q89ED5"/>
<dbReference type="OrthoDB" id="9802240at2"/>
<dbReference type="Proteomes" id="UP000002526">
    <property type="component" value="Chromosome"/>
</dbReference>
<dbReference type="GO" id="GO:0042597">
    <property type="term" value="C:periplasmic space"/>
    <property type="evidence" value="ECO:0007669"/>
    <property type="project" value="UniProtKB-SubCell"/>
</dbReference>
<dbReference type="GO" id="GO:0051301">
    <property type="term" value="P:cell division"/>
    <property type="evidence" value="ECO:0007669"/>
    <property type="project" value="UniProtKB-UniRule"/>
</dbReference>
<dbReference type="GO" id="GO:0017038">
    <property type="term" value="P:protein import"/>
    <property type="evidence" value="ECO:0007669"/>
    <property type="project" value="InterPro"/>
</dbReference>
<dbReference type="Gene3D" id="2.120.10.30">
    <property type="entry name" value="TolB, C-terminal domain"/>
    <property type="match status" value="1"/>
</dbReference>
<dbReference type="Gene3D" id="3.40.50.10070">
    <property type="entry name" value="TolB, N-terminal domain"/>
    <property type="match status" value="1"/>
</dbReference>
<dbReference type="HAMAP" id="MF_00671">
    <property type="entry name" value="TolB"/>
    <property type="match status" value="1"/>
</dbReference>
<dbReference type="InterPro" id="IPR011042">
    <property type="entry name" value="6-blade_b-propeller_TolB-like"/>
</dbReference>
<dbReference type="InterPro" id="IPR011659">
    <property type="entry name" value="PD40"/>
</dbReference>
<dbReference type="InterPro" id="IPR006311">
    <property type="entry name" value="TAT_signal"/>
</dbReference>
<dbReference type="InterPro" id="IPR014167">
    <property type="entry name" value="Tol-Pal_TolB"/>
</dbReference>
<dbReference type="InterPro" id="IPR007195">
    <property type="entry name" value="TolB_N"/>
</dbReference>
<dbReference type="NCBIfam" id="TIGR02800">
    <property type="entry name" value="propeller_TolB"/>
    <property type="match status" value="1"/>
</dbReference>
<dbReference type="PANTHER" id="PTHR36842:SF1">
    <property type="entry name" value="PROTEIN TOLB"/>
    <property type="match status" value="1"/>
</dbReference>
<dbReference type="PANTHER" id="PTHR36842">
    <property type="entry name" value="PROTEIN TOLB HOMOLOG"/>
    <property type="match status" value="1"/>
</dbReference>
<dbReference type="Pfam" id="PF07676">
    <property type="entry name" value="PD40"/>
    <property type="match status" value="4"/>
</dbReference>
<dbReference type="Pfam" id="PF04052">
    <property type="entry name" value="TolB_N"/>
    <property type="match status" value="1"/>
</dbReference>
<dbReference type="SUPFAM" id="SSF52964">
    <property type="entry name" value="TolB, N-terminal domain"/>
    <property type="match status" value="1"/>
</dbReference>
<dbReference type="SUPFAM" id="SSF69304">
    <property type="entry name" value="Tricorn protease N-terminal domain"/>
    <property type="match status" value="1"/>
</dbReference>
<dbReference type="PROSITE" id="PS51318">
    <property type="entry name" value="TAT"/>
    <property type="match status" value="1"/>
</dbReference>
<sequence>MNDARSITRRRFMTLTGSGLAMLGGGHAFAQGQPRLRIDPTEFQPVPIAITNFLPGSPSDGDVGNGVTQVITNNLKRSGLFAPIDQAAFIERISNIDVAPQFQNWKTINAQALVTGRMTRQPDGRLKAEFRLWDVVSGQQLAGQQYFTSPEYWRRIAHIISDQIYERMTGEKGYFDSRVVFVDETGPKERRVKRLAMMDQDGANVRYLTRGSDLVLTPRFSPNSQEITYMEFGQGDPKVYLFNIETGQREIVGNFPGMTFAPRFSPDGQRVIMSLQQGGNSNLFVMDLRSRSTTRLTDTPAIDTSPSYSPDGTRICFESDRGGRSQIYVMAAGGGAAQRISFSKDDTNATYSTPVWSPRGDYIAFTRQGGGQFSIGVMKPDGSGERLLTSGFHNEGPTFSPNGRVLMFFRDPGGSGGPSLYSVDISGRNELKVPTPGFASDPAWSPLLSSTAGQ</sequence>
<evidence type="ECO:0000255" key="1">
    <source>
        <dbReference type="HAMAP-Rule" id="MF_00671"/>
    </source>
</evidence>
<evidence type="ECO:0000305" key="2"/>
<feature type="signal peptide" evidence="1">
    <location>
        <begin position="1"/>
        <end position="30"/>
    </location>
</feature>
<feature type="chain" id="PRO_0000034629" description="Tol-Pal system protein TolB" evidence="1">
    <location>
        <begin position="31"/>
        <end position="454"/>
    </location>
</feature>